<protein>
    <recommendedName>
        <fullName evidence="1">Glycine--tRNA ligase alpha subunit</fullName>
        <ecNumber evidence="1">6.1.1.14</ecNumber>
    </recommendedName>
    <alternativeName>
        <fullName evidence="1">Glycyl-tRNA synthetase alpha subunit</fullName>
        <shortName evidence="1">GlyRS</shortName>
    </alternativeName>
</protein>
<reference key="1">
    <citation type="submission" date="2005-11" db="EMBL/GenBank/DDBJ databases">
        <title>The complete genome sequence of Lawsonia intracellularis: the causative agent of proliferative enteropathy.</title>
        <authorList>
            <person name="Kaur K."/>
            <person name="Zhang Q."/>
            <person name="Beckler D."/>
            <person name="Munir S."/>
            <person name="Li L."/>
            <person name="Kinsley K."/>
            <person name="Herron L."/>
            <person name="Peterson A."/>
            <person name="May B."/>
            <person name="Singh S."/>
            <person name="Gebhart C."/>
            <person name="Kapur V."/>
        </authorList>
    </citation>
    <scope>NUCLEOTIDE SEQUENCE [LARGE SCALE GENOMIC DNA]</scope>
    <source>
        <strain>PHE/MN1-00</strain>
    </source>
</reference>
<keyword id="KW-0030">Aminoacyl-tRNA synthetase</keyword>
<keyword id="KW-0067">ATP-binding</keyword>
<keyword id="KW-0963">Cytoplasm</keyword>
<keyword id="KW-0436">Ligase</keyword>
<keyword id="KW-0547">Nucleotide-binding</keyword>
<keyword id="KW-0648">Protein biosynthesis</keyword>
<keyword id="KW-1185">Reference proteome</keyword>
<evidence type="ECO:0000255" key="1">
    <source>
        <dbReference type="HAMAP-Rule" id="MF_00254"/>
    </source>
</evidence>
<accession>Q1MRM0</accession>
<name>SYGA_LAWIP</name>
<feature type="chain" id="PRO_1000047440" description="Glycine--tRNA ligase alpha subunit">
    <location>
        <begin position="1"/>
        <end position="294"/>
    </location>
</feature>
<gene>
    <name evidence="1" type="primary">glyQ</name>
    <name type="ordered locus">LI0300</name>
</gene>
<proteinExistence type="inferred from homology"/>
<organism>
    <name type="scientific">Lawsonia intracellularis (strain PHE/MN1-00)</name>
    <dbReference type="NCBI Taxonomy" id="363253"/>
    <lineage>
        <taxon>Bacteria</taxon>
        <taxon>Pseudomonadati</taxon>
        <taxon>Thermodesulfobacteriota</taxon>
        <taxon>Desulfovibrionia</taxon>
        <taxon>Desulfovibrionales</taxon>
        <taxon>Desulfovibrionaceae</taxon>
        <taxon>Lawsonia</taxon>
    </lineage>
</organism>
<sequence>MYFQDIIFMLQKYWSSRGCVIAQPMDIECGAGTFNPATFLRVIGPEPWSVAYIEPSRRPTDGRYGENPNRLQSYFQFQVVLKPSPDDIIEQYLGSLQILGIDSTLHDIRFVEDDWESPTLGAWGLGWEIWLDGMEVTQFTYFQQVGGIDLEPISVELTYGLERLAMYLQEKDSVYDLQWNEYVTYGQMYHQNEVEQSSYNFDESDVSMLLKLFKDFDNECRQLIKKGFVWPAYDYCLKCSHTFNLLDARGAISTTERASYISKVRALASSIAKLYALQREKMGYPMLLKGSGEI</sequence>
<comment type="catalytic activity">
    <reaction evidence="1">
        <text>tRNA(Gly) + glycine + ATP = glycyl-tRNA(Gly) + AMP + diphosphate</text>
        <dbReference type="Rhea" id="RHEA:16013"/>
        <dbReference type="Rhea" id="RHEA-COMP:9664"/>
        <dbReference type="Rhea" id="RHEA-COMP:9683"/>
        <dbReference type="ChEBI" id="CHEBI:30616"/>
        <dbReference type="ChEBI" id="CHEBI:33019"/>
        <dbReference type="ChEBI" id="CHEBI:57305"/>
        <dbReference type="ChEBI" id="CHEBI:78442"/>
        <dbReference type="ChEBI" id="CHEBI:78522"/>
        <dbReference type="ChEBI" id="CHEBI:456215"/>
        <dbReference type="EC" id="6.1.1.14"/>
    </reaction>
</comment>
<comment type="subunit">
    <text evidence="1">Tetramer of two alpha and two beta subunits.</text>
</comment>
<comment type="subcellular location">
    <subcellularLocation>
        <location evidence="1">Cytoplasm</location>
    </subcellularLocation>
</comment>
<comment type="similarity">
    <text evidence="1">Belongs to the class-II aminoacyl-tRNA synthetase family.</text>
</comment>
<dbReference type="EC" id="6.1.1.14" evidence="1"/>
<dbReference type="EMBL" id="AM180252">
    <property type="protein sequence ID" value="CAJ54356.1"/>
    <property type="molecule type" value="Genomic_DNA"/>
</dbReference>
<dbReference type="RefSeq" id="WP_011526385.1">
    <property type="nucleotide sequence ID" value="NC_008011.1"/>
</dbReference>
<dbReference type="SMR" id="Q1MRM0"/>
<dbReference type="STRING" id="363253.LI0300"/>
<dbReference type="KEGG" id="lip:LI0300"/>
<dbReference type="eggNOG" id="COG0752">
    <property type="taxonomic scope" value="Bacteria"/>
</dbReference>
<dbReference type="HOGENOM" id="CLU_057066_1_0_7"/>
<dbReference type="OrthoDB" id="9802183at2"/>
<dbReference type="Proteomes" id="UP000002430">
    <property type="component" value="Chromosome"/>
</dbReference>
<dbReference type="GO" id="GO:0005829">
    <property type="term" value="C:cytosol"/>
    <property type="evidence" value="ECO:0007669"/>
    <property type="project" value="TreeGrafter"/>
</dbReference>
<dbReference type="GO" id="GO:0005524">
    <property type="term" value="F:ATP binding"/>
    <property type="evidence" value="ECO:0007669"/>
    <property type="project" value="UniProtKB-UniRule"/>
</dbReference>
<dbReference type="GO" id="GO:0004820">
    <property type="term" value="F:glycine-tRNA ligase activity"/>
    <property type="evidence" value="ECO:0007669"/>
    <property type="project" value="UniProtKB-UniRule"/>
</dbReference>
<dbReference type="GO" id="GO:0006426">
    <property type="term" value="P:glycyl-tRNA aminoacylation"/>
    <property type="evidence" value="ECO:0007669"/>
    <property type="project" value="UniProtKB-UniRule"/>
</dbReference>
<dbReference type="CDD" id="cd00733">
    <property type="entry name" value="GlyRS_alpha_core"/>
    <property type="match status" value="1"/>
</dbReference>
<dbReference type="FunFam" id="3.30.930.10:FF:000006">
    <property type="entry name" value="Glycine--tRNA ligase alpha subunit"/>
    <property type="match status" value="1"/>
</dbReference>
<dbReference type="Gene3D" id="3.30.930.10">
    <property type="entry name" value="Bira Bifunctional Protein, Domain 2"/>
    <property type="match status" value="1"/>
</dbReference>
<dbReference type="Gene3D" id="1.20.58.180">
    <property type="entry name" value="Class II aaRS and biotin synthetases, domain 2"/>
    <property type="match status" value="1"/>
</dbReference>
<dbReference type="HAMAP" id="MF_00254">
    <property type="entry name" value="Gly_tRNA_synth_alpha"/>
    <property type="match status" value="1"/>
</dbReference>
<dbReference type="InterPro" id="IPR045864">
    <property type="entry name" value="aa-tRNA-synth_II/BPL/LPL"/>
</dbReference>
<dbReference type="InterPro" id="IPR006194">
    <property type="entry name" value="Gly-tRNA-synth_heterodimer"/>
</dbReference>
<dbReference type="InterPro" id="IPR002310">
    <property type="entry name" value="Gly-tRNA_ligase_asu"/>
</dbReference>
<dbReference type="NCBIfam" id="TIGR00388">
    <property type="entry name" value="glyQ"/>
    <property type="match status" value="1"/>
</dbReference>
<dbReference type="NCBIfam" id="NF006827">
    <property type="entry name" value="PRK09348.1"/>
    <property type="match status" value="1"/>
</dbReference>
<dbReference type="PANTHER" id="PTHR30075:SF2">
    <property type="entry name" value="GLYCINE--TRNA LIGASE, CHLOROPLASTIC_MITOCHONDRIAL 2"/>
    <property type="match status" value="1"/>
</dbReference>
<dbReference type="PANTHER" id="PTHR30075">
    <property type="entry name" value="GLYCYL-TRNA SYNTHETASE"/>
    <property type="match status" value="1"/>
</dbReference>
<dbReference type="Pfam" id="PF02091">
    <property type="entry name" value="tRNA-synt_2e"/>
    <property type="match status" value="1"/>
</dbReference>
<dbReference type="PRINTS" id="PR01044">
    <property type="entry name" value="TRNASYNTHGA"/>
</dbReference>
<dbReference type="SUPFAM" id="SSF55681">
    <property type="entry name" value="Class II aaRS and biotin synthetases"/>
    <property type="match status" value="1"/>
</dbReference>
<dbReference type="PROSITE" id="PS50861">
    <property type="entry name" value="AA_TRNA_LIGASE_II_GLYAB"/>
    <property type="match status" value="1"/>
</dbReference>